<gene>
    <name evidence="1" type="primary">leuD</name>
    <name type="ordered locus">Asuc_1910</name>
</gene>
<proteinExistence type="inferred from homology"/>
<name>LEUD_ACTSZ</name>
<organism>
    <name type="scientific">Actinobacillus succinogenes (strain ATCC 55618 / DSM 22257 / CCUG 43843 / 130Z)</name>
    <dbReference type="NCBI Taxonomy" id="339671"/>
    <lineage>
        <taxon>Bacteria</taxon>
        <taxon>Pseudomonadati</taxon>
        <taxon>Pseudomonadota</taxon>
        <taxon>Gammaproteobacteria</taxon>
        <taxon>Pasteurellales</taxon>
        <taxon>Pasteurellaceae</taxon>
        <taxon>Actinobacillus</taxon>
    </lineage>
</organism>
<sequence length="200" mass="22767">MAGLKQHSGLVVPLDAANVDTDAIIPKQFLQAITRVGFGKHLFHEWRYLDAEETRPNPEFVLNFPQYQGATILLARKNLGCGSSREHAPWALADYGFKVMIAPSFADIFYNNSLNNHMLPIKLSEQEVDEIFHWVWANPGKQIHVDLEAKTVTVGDKVYHFELDEFRRHCLLEGLDNIGLTLQHEDAIAAYEKKIPAFLR</sequence>
<dbReference type="EC" id="4.2.1.33" evidence="1"/>
<dbReference type="EMBL" id="CP000746">
    <property type="protein sequence ID" value="ABR75258.1"/>
    <property type="molecule type" value="Genomic_DNA"/>
</dbReference>
<dbReference type="RefSeq" id="WP_012073635.1">
    <property type="nucleotide sequence ID" value="NC_009655.1"/>
</dbReference>
<dbReference type="SMR" id="A6VQL1"/>
<dbReference type="STRING" id="339671.Asuc_1910"/>
<dbReference type="KEGG" id="asu:Asuc_1910"/>
<dbReference type="eggNOG" id="COG0066">
    <property type="taxonomic scope" value="Bacteria"/>
</dbReference>
<dbReference type="HOGENOM" id="CLU_081378_0_3_6"/>
<dbReference type="OrthoDB" id="9777465at2"/>
<dbReference type="UniPathway" id="UPA00048">
    <property type="reaction ID" value="UER00071"/>
</dbReference>
<dbReference type="Proteomes" id="UP000001114">
    <property type="component" value="Chromosome"/>
</dbReference>
<dbReference type="GO" id="GO:0009316">
    <property type="term" value="C:3-isopropylmalate dehydratase complex"/>
    <property type="evidence" value="ECO:0007669"/>
    <property type="project" value="InterPro"/>
</dbReference>
<dbReference type="GO" id="GO:0003861">
    <property type="term" value="F:3-isopropylmalate dehydratase activity"/>
    <property type="evidence" value="ECO:0007669"/>
    <property type="project" value="UniProtKB-UniRule"/>
</dbReference>
<dbReference type="GO" id="GO:0009098">
    <property type="term" value="P:L-leucine biosynthetic process"/>
    <property type="evidence" value="ECO:0007669"/>
    <property type="project" value="UniProtKB-UniRule"/>
</dbReference>
<dbReference type="CDD" id="cd01577">
    <property type="entry name" value="IPMI_Swivel"/>
    <property type="match status" value="1"/>
</dbReference>
<dbReference type="FunFam" id="3.20.19.10:FF:000003">
    <property type="entry name" value="3-isopropylmalate dehydratase small subunit"/>
    <property type="match status" value="1"/>
</dbReference>
<dbReference type="Gene3D" id="3.20.19.10">
    <property type="entry name" value="Aconitase, domain 4"/>
    <property type="match status" value="1"/>
</dbReference>
<dbReference type="HAMAP" id="MF_01031">
    <property type="entry name" value="LeuD_type1"/>
    <property type="match status" value="1"/>
</dbReference>
<dbReference type="InterPro" id="IPR004431">
    <property type="entry name" value="3-IsopropMal_deHydase_ssu"/>
</dbReference>
<dbReference type="InterPro" id="IPR015928">
    <property type="entry name" value="Aconitase/3IPM_dehydase_swvl"/>
</dbReference>
<dbReference type="InterPro" id="IPR000573">
    <property type="entry name" value="AconitaseA/IPMdHydase_ssu_swvl"/>
</dbReference>
<dbReference type="InterPro" id="IPR033940">
    <property type="entry name" value="IPMI_Swivel"/>
</dbReference>
<dbReference type="InterPro" id="IPR050075">
    <property type="entry name" value="LeuD"/>
</dbReference>
<dbReference type="NCBIfam" id="TIGR00171">
    <property type="entry name" value="leuD"/>
    <property type="match status" value="1"/>
</dbReference>
<dbReference type="NCBIfam" id="NF002458">
    <property type="entry name" value="PRK01641.1"/>
    <property type="match status" value="1"/>
</dbReference>
<dbReference type="PANTHER" id="PTHR43345:SF5">
    <property type="entry name" value="3-ISOPROPYLMALATE DEHYDRATASE SMALL SUBUNIT"/>
    <property type="match status" value="1"/>
</dbReference>
<dbReference type="PANTHER" id="PTHR43345">
    <property type="entry name" value="3-ISOPROPYLMALATE DEHYDRATASE SMALL SUBUNIT 2-RELATED-RELATED"/>
    <property type="match status" value="1"/>
</dbReference>
<dbReference type="Pfam" id="PF00694">
    <property type="entry name" value="Aconitase_C"/>
    <property type="match status" value="1"/>
</dbReference>
<dbReference type="SUPFAM" id="SSF52016">
    <property type="entry name" value="LeuD/IlvD-like"/>
    <property type="match status" value="1"/>
</dbReference>
<protein>
    <recommendedName>
        <fullName evidence="1">3-isopropylmalate dehydratase small subunit</fullName>
        <ecNumber evidence="1">4.2.1.33</ecNumber>
    </recommendedName>
    <alternativeName>
        <fullName evidence="1">Alpha-IPM isomerase</fullName>
        <shortName evidence="1">IPMI</shortName>
    </alternativeName>
    <alternativeName>
        <fullName evidence="1">Isopropylmalate isomerase</fullName>
    </alternativeName>
</protein>
<comment type="function">
    <text evidence="1">Catalyzes the isomerization between 2-isopropylmalate and 3-isopropylmalate, via the formation of 2-isopropylmaleate.</text>
</comment>
<comment type="catalytic activity">
    <reaction evidence="1">
        <text>(2R,3S)-3-isopropylmalate = (2S)-2-isopropylmalate</text>
        <dbReference type="Rhea" id="RHEA:32287"/>
        <dbReference type="ChEBI" id="CHEBI:1178"/>
        <dbReference type="ChEBI" id="CHEBI:35121"/>
        <dbReference type="EC" id="4.2.1.33"/>
    </reaction>
</comment>
<comment type="pathway">
    <text evidence="1">Amino-acid biosynthesis; L-leucine biosynthesis; L-leucine from 3-methyl-2-oxobutanoate: step 2/4.</text>
</comment>
<comment type="subunit">
    <text evidence="1">Heterodimer of LeuC and LeuD.</text>
</comment>
<comment type="similarity">
    <text evidence="1">Belongs to the LeuD family. LeuD type 1 subfamily.</text>
</comment>
<reference key="1">
    <citation type="journal article" date="2010" name="BMC Genomics">
        <title>A genomic perspective on the potential of Actinobacillus succinogenes for industrial succinate production.</title>
        <authorList>
            <person name="McKinlay J.B."/>
            <person name="Laivenieks M."/>
            <person name="Schindler B.D."/>
            <person name="McKinlay A.A."/>
            <person name="Siddaramappa S."/>
            <person name="Challacombe J.F."/>
            <person name="Lowry S.R."/>
            <person name="Clum A."/>
            <person name="Lapidus A.L."/>
            <person name="Burkhart K.B."/>
            <person name="Harkins V."/>
            <person name="Vieille C."/>
        </authorList>
    </citation>
    <scope>NUCLEOTIDE SEQUENCE [LARGE SCALE GENOMIC DNA]</scope>
    <source>
        <strain>ATCC 55618 / DSM 22257 / CCUG 43843 / 130Z</strain>
    </source>
</reference>
<feature type="chain" id="PRO_1000072955" description="3-isopropylmalate dehydratase small subunit">
    <location>
        <begin position="1"/>
        <end position="200"/>
    </location>
</feature>
<accession>A6VQL1</accession>
<keyword id="KW-0028">Amino-acid biosynthesis</keyword>
<keyword id="KW-0100">Branched-chain amino acid biosynthesis</keyword>
<keyword id="KW-0432">Leucine biosynthesis</keyword>
<keyword id="KW-0456">Lyase</keyword>
<keyword id="KW-1185">Reference proteome</keyword>
<evidence type="ECO:0000255" key="1">
    <source>
        <dbReference type="HAMAP-Rule" id="MF_01031"/>
    </source>
</evidence>